<feature type="chain" id="PRO_0000323401" description="Large ribosomal subunit protein uL22">
    <location>
        <begin position="1"/>
        <end position="183"/>
    </location>
</feature>
<feature type="region of interest" description="Disordered" evidence="1">
    <location>
        <begin position="163"/>
        <end position="183"/>
    </location>
</feature>
<feature type="compositionally biased region" description="Basic residues" evidence="1">
    <location>
        <begin position="165"/>
        <end position="183"/>
    </location>
</feature>
<dbReference type="EMBL" id="AY853172">
    <property type="protein sequence ID" value="AAW47435.1"/>
    <property type="molecule type" value="mRNA"/>
</dbReference>
<dbReference type="SMR" id="Q5I5J1"/>
<dbReference type="GO" id="GO:0022625">
    <property type="term" value="C:cytosolic large ribosomal subunit"/>
    <property type="evidence" value="ECO:0007669"/>
    <property type="project" value="TreeGrafter"/>
</dbReference>
<dbReference type="GO" id="GO:0003735">
    <property type="term" value="F:structural constituent of ribosome"/>
    <property type="evidence" value="ECO:0007669"/>
    <property type="project" value="InterPro"/>
</dbReference>
<dbReference type="GO" id="GO:0002181">
    <property type="term" value="P:cytoplasmic translation"/>
    <property type="evidence" value="ECO:0007669"/>
    <property type="project" value="TreeGrafter"/>
</dbReference>
<dbReference type="CDD" id="cd00336">
    <property type="entry name" value="Ribosomal_L22"/>
    <property type="match status" value="1"/>
</dbReference>
<dbReference type="FunFam" id="3.90.470.10:FF:000003">
    <property type="entry name" value="60S ribosomal protein L17"/>
    <property type="match status" value="1"/>
</dbReference>
<dbReference type="Gene3D" id="3.90.470.10">
    <property type="entry name" value="Ribosomal protein L22/L17"/>
    <property type="match status" value="1"/>
</dbReference>
<dbReference type="InterPro" id="IPR001063">
    <property type="entry name" value="Ribosomal_uL22"/>
</dbReference>
<dbReference type="InterPro" id="IPR018260">
    <property type="entry name" value="Ribosomal_uL22_CS"/>
</dbReference>
<dbReference type="InterPro" id="IPR005721">
    <property type="entry name" value="Ribosomal_uL22_euk/arc"/>
</dbReference>
<dbReference type="InterPro" id="IPR036394">
    <property type="entry name" value="Ribosomal_uL22_sf"/>
</dbReference>
<dbReference type="NCBIfam" id="TIGR01038">
    <property type="entry name" value="uL22_arch_euk"/>
    <property type="match status" value="1"/>
</dbReference>
<dbReference type="PANTHER" id="PTHR11593">
    <property type="entry name" value="60S RIBOSOMAL PROTEIN L17"/>
    <property type="match status" value="1"/>
</dbReference>
<dbReference type="PANTHER" id="PTHR11593:SF10">
    <property type="entry name" value="60S RIBOSOMAL PROTEIN L17"/>
    <property type="match status" value="1"/>
</dbReference>
<dbReference type="Pfam" id="PF00237">
    <property type="entry name" value="Ribosomal_L22"/>
    <property type="match status" value="1"/>
</dbReference>
<dbReference type="SUPFAM" id="SSF54843">
    <property type="entry name" value="Ribosomal protein L22"/>
    <property type="match status" value="1"/>
</dbReference>
<dbReference type="PROSITE" id="PS00464">
    <property type="entry name" value="RIBOSOMAL_L22"/>
    <property type="match status" value="1"/>
</dbReference>
<accession>Q5I5J1</accession>
<sequence length="183" mass="21041">MARYKFNPENPNRVCKAKGTNFRVHYKNTSETGRAIKGMHLHKARSYLSNVVEHKQCIPFRRHKGGVGRCAQAKNFNTTQGRWPKKSCEFMLQLLKNAESNAELRGLDVDSLVVAHVSVDAAAKMRRRTYRAHGRINPYMSSPCHIELCLEERDRVVPKGDIKTAAKKQSAKKLKKQKMMYRE</sequence>
<name>RL17_PECGU</name>
<keyword id="KW-0687">Ribonucleoprotein</keyword>
<keyword id="KW-0689">Ribosomal protein</keyword>
<reference key="1">
    <citation type="submission" date="2004-12" db="EMBL/GenBank/DDBJ databases">
        <authorList>
            <person name="Dobson M.L."/>
            <person name="Tauer T.J."/>
        </authorList>
    </citation>
    <scope>NUCLEOTIDE SEQUENCE [MRNA]</scope>
</reference>
<comment type="similarity">
    <text evidence="2">Belongs to the universal ribosomal protein uL22 family.</text>
</comment>
<organism>
    <name type="scientific">Pectinaria gouldii</name>
    <name type="common">Trumpet worm</name>
    <name type="synonym">Ice-cream cone worm</name>
    <dbReference type="NCBI Taxonomy" id="260746"/>
    <lineage>
        <taxon>Eukaryota</taxon>
        <taxon>Metazoa</taxon>
        <taxon>Spiralia</taxon>
        <taxon>Lophotrochozoa</taxon>
        <taxon>Annelida</taxon>
        <taxon>Polychaeta</taxon>
        <taxon>Sedentaria</taxon>
        <taxon>Canalipalpata</taxon>
        <taxon>Terebellida</taxon>
        <taxon>Terebelliformia</taxon>
        <taxon>Pectinariidae</taxon>
        <taxon>Pectinaria</taxon>
    </lineage>
</organism>
<protein>
    <recommendedName>
        <fullName evidence="2">Large ribosomal subunit protein uL22</fullName>
    </recommendedName>
    <alternativeName>
        <fullName>60S ribosomal protein L17</fullName>
    </alternativeName>
</protein>
<proteinExistence type="evidence at transcript level"/>
<gene>
    <name type="primary">rpl-17</name>
</gene>
<evidence type="ECO:0000256" key="1">
    <source>
        <dbReference type="SAM" id="MobiDB-lite"/>
    </source>
</evidence>
<evidence type="ECO:0000305" key="2"/>